<proteinExistence type="inferred from homology"/>
<name>OSTCN_MACMU</name>
<evidence type="ECO:0000250" key="1"/>
<evidence type="ECO:0000250" key="2">
    <source>
        <dbReference type="UniProtKB" id="P02818"/>
    </source>
</evidence>
<evidence type="ECO:0000250" key="3">
    <source>
        <dbReference type="UniProtKB" id="P02820"/>
    </source>
</evidence>
<evidence type="ECO:0000250" key="4">
    <source>
        <dbReference type="UniProtKB" id="P83489"/>
    </source>
</evidence>
<evidence type="ECO:0000250" key="5">
    <source>
        <dbReference type="UniProtKB" id="P86546"/>
    </source>
</evidence>
<evidence type="ECO:0000255" key="6">
    <source>
        <dbReference type="PROSITE-ProRule" id="PRU00463"/>
    </source>
</evidence>
<evidence type="ECO:0000305" key="7"/>
<dbReference type="EMBL" id="DQ976876">
    <property type="protein sequence ID" value="ABM55163.1"/>
    <property type="molecule type" value="Genomic_DNA"/>
</dbReference>
<dbReference type="RefSeq" id="NP_001074237.1">
    <property type="nucleotide sequence ID" value="NM_001080768.1"/>
</dbReference>
<dbReference type="SMR" id="A2D670"/>
<dbReference type="FunCoup" id="A2D670">
    <property type="interactions" value="109"/>
</dbReference>
<dbReference type="PaxDb" id="9544-ENSMMUP00000000113"/>
<dbReference type="Ensembl" id="ENSMMUT00000000124.4">
    <property type="protein sequence ID" value="ENSMMUP00000000113.2"/>
    <property type="gene ID" value="ENSMMUG00000004902.4"/>
</dbReference>
<dbReference type="GeneID" id="718296"/>
<dbReference type="KEGG" id="mcc:718296"/>
<dbReference type="CTD" id="632"/>
<dbReference type="VEuPathDB" id="HostDB:ENSMMUG00000004902"/>
<dbReference type="eggNOG" id="ENOG502S85I">
    <property type="taxonomic scope" value="Eukaryota"/>
</dbReference>
<dbReference type="GeneTree" id="ENSGT00940000155399"/>
<dbReference type="HOGENOM" id="CLU_160110_0_0_1"/>
<dbReference type="InParanoid" id="A2D670"/>
<dbReference type="OrthoDB" id="9950568at2759"/>
<dbReference type="TreeFam" id="TF330920"/>
<dbReference type="Proteomes" id="UP000006718">
    <property type="component" value="Chromosome 1"/>
</dbReference>
<dbReference type="Bgee" id="ENSMMUG00000004902">
    <property type="expression patterns" value="Expressed in olfactory segment of nasal mucosa and 22 other cell types or tissues"/>
</dbReference>
<dbReference type="ExpressionAtlas" id="A2D670">
    <property type="expression patterns" value="baseline and differential"/>
</dbReference>
<dbReference type="GO" id="GO:0005737">
    <property type="term" value="C:cytoplasm"/>
    <property type="evidence" value="ECO:0000250"/>
    <property type="project" value="UniProtKB"/>
</dbReference>
<dbReference type="GO" id="GO:0005576">
    <property type="term" value="C:extracellular region"/>
    <property type="evidence" value="ECO:0000318"/>
    <property type="project" value="GO_Central"/>
</dbReference>
<dbReference type="GO" id="GO:0005509">
    <property type="term" value="F:calcium ion binding"/>
    <property type="evidence" value="ECO:0007669"/>
    <property type="project" value="InterPro"/>
</dbReference>
<dbReference type="GO" id="GO:0005179">
    <property type="term" value="F:hormone activity"/>
    <property type="evidence" value="ECO:0000250"/>
    <property type="project" value="UniProtKB"/>
</dbReference>
<dbReference type="GO" id="GO:0046848">
    <property type="term" value="F:hydroxyapatite binding"/>
    <property type="evidence" value="ECO:0000318"/>
    <property type="project" value="GO_Central"/>
</dbReference>
<dbReference type="GO" id="GO:0008147">
    <property type="term" value="F:structural constituent of bone"/>
    <property type="evidence" value="ECO:0000250"/>
    <property type="project" value="UniProtKB"/>
</dbReference>
<dbReference type="GO" id="GO:0031214">
    <property type="term" value="P:biomineral tissue development"/>
    <property type="evidence" value="ECO:0007669"/>
    <property type="project" value="UniProtKB-KW"/>
</dbReference>
<dbReference type="GO" id="GO:0060348">
    <property type="term" value="P:bone development"/>
    <property type="evidence" value="ECO:0000318"/>
    <property type="project" value="GO_Central"/>
</dbReference>
<dbReference type="GO" id="GO:0007420">
    <property type="term" value="P:brain development"/>
    <property type="evidence" value="ECO:0000250"/>
    <property type="project" value="UniProtKB"/>
</dbReference>
<dbReference type="GO" id="GO:0032869">
    <property type="term" value="P:cellular response to insulin stimulus"/>
    <property type="evidence" value="ECO:0000250"/>
    <property type="project" value="UniProtKB"/>
</dbReference>
<dbReference type="GO" id="GO:0050890">
    <property type="term" value="P:cognition"/>
    <property type="evidence" value="ECO:0000250"/>
    <property type="project" value="UniProtKB"/>
</dbReference>
<dbReference type="GO" id="GO:0042593">
    <property type="term" value="P:glucose homeostasis"/>
    <property type="evidence" value="ECO:0000250"/>
    <property type="project" value="UniProtKB"/>
</dbReference>
<dbReference type="GO" id="GO:0007611">
    <property type="term" value="P:learning or memory"/>
    <property type="evidence" value="ECO:0000250"/>
    <property type="project" value="UniProtKB"/>
</dbReference>
<dbReference type="GO" id="GO:1903011">
    <property type="term" value="P:negative regulation of bone development"/>
    <property type="evidence" value="ECO:0000250"/>
    <property type="project" value="UniProtKB"/>
</dbReference>
<dbReference type="GO" id="GO:0001649">
    <property type="term" value="P:osteoblast differentiation"/>
    <property type="evidence" value="ECO:0000318"/>
    <property type="project" value="GO_Central"/>
</dbReference>
<dbReference type="GO" id="GO:0001956">
    <property type="term" value="P:positive regulation of neurotransmitter secretion"/>
    <property type="evidence" value="ECO:0000250"/>
    <property type="project" value="UniProtKB"/>
</dbReference>
<dbReference type="GO" id="GO:0030500">
    <property type="term" value="P:regulation of bone mineralization"/>
    <property type="evidence" value="ECO:0007669"/>
    <property type="project" value="InterPro"/>
</dbReference>
<dbReference type="GO" id="GO:1900076">
    <property type="term" value="P:regulation of cellular response to insulin stimulus"/>
    <property type="evidence" value="ECO:0007669"/>
    <property type="project" value="InterPro"/>
</dbReference>
<dbReference type="GO" id="GO:2000224">
    <property type="term" value="P:regulation of testosterone biosynthetic process"/>
    <property type="evidence" value="ECO:0000250"/>
    <property type="project" value="UniProtKB"/>
</dbReference>
<dbReference type="GO" id="GO:0032571">
    <property type="term" value="P:response to vitamin K"/>
    <property type="evidence" value="ECO:0007669"/>
    <property type="project" value="InterPro"/>
</dbReference>
<dbReference type="GO" id="GO:0044342">
    <property type="term" value="P:type B pancreatic cell proliferation"/>
    <property type="evidence" value="ECO:0000250"/>
    <property type="project" value="UniProtKB"/>
</dbReference>
<dbReference type="InterPro" id="IPR035972">
    <property type="entry name" value="GLA-like_dom_SF"/>
</dbReference>
<dbReference type="InterPro" id="IPR000294">
    <property type="entry name" value="GLA_domain"/>
</dbReference>
<dbReference type="InterPro" id="IPR039176">
    <property type="entry name" value="Osteocalcin"/>
</dbReference>
<dbReference type="InterPro" id="IPR002384">
    <property type="entry name" value="Osteocalcin/MGP"/>
</dbReference>
<dbReference type="PANTHER" id="PTHR14235">
    <property type="entry name" value="OSTEOCALCIN"/>
    <property type="match status" value="1"/>
</dbReference>
<dbReference type="PANTHER" id="PTHR14235:SF0">
    <property type="entry name" value="OSTEOCALCIN"/>
    <property type="match status" value="1"/>
</dbReference>
<dbReference type="PRINTS" id="PR00002">
    <property type="entry name" value="GLABONE"/>
</dbReference>
<dbReference type="SMART" id="SM00069">
    <property type="entry name" value="GLA"/>
    <property type="match status" value="1"/>
</dbReference>
<dbReference type="SUPFAM" id="SSF57630">
    <property type="entry name" value="GLA-domain"/>
    <property type="match status" value="1"/>
</dbReference>
<dbReference type="PROSITE" id="PS00011">
    <property type="entry name" value="GLA_1"/>
    <property type="match status" value="1"/>
</dbReference>
<dbReference type="PROSITE" id="PS50998">
    <property type="entry name" value="GLA_2"/>
    <property type="match status" value="1"/>
</dbReference>
<reference key="1">
    <citation type="submission" date="2006-08" db="EMBL/GenBank/DDBJ databases">
        <title>Positive selection in transcription factor genes on the human lineage.</title>
        <authorList>
            <person name="Nickel G.C."/>
            <person name="Tefft D.L."/>
            <person name="Trevarthen K."/>
            <person name="Funt J."/>
            <person name="Adams M.D."/>
        </authorList>
    </citation>
    <scope>NUCLEOTIDE SEQUENCE [GENOMIC DNA]</scope>
</reference>
<accession>A2D670</accession>
<comment type="function">
    <text evidence="5">The carboxylated form is one of the main organic components of the bone matrix, which constitutes 1-2% of the total bone protein: it acts as a negative regulator of bone formation and is required to limit bone formation without impairing bone resorption or mineralization. The carboxylated form binds strongly to apatite and calcium.</text>
</comment>
<comment type="function">
    <text evidence="5">The uncarboxylated form acts as a hormone secreted by osteoblasts, which regulates different cellular processes, such as energy metabolism, male fertility and brain development. Regulates of energy metabolism by acting as a hormone favoring pancreatic beta-cell proliferation, insulin secretion and sensitivity and energy expenditure. Uncarboxylated osteocalcin hormone also promotes testosterone production in the testes: acts as a ligand for G protein-coupled receptor GPRC6A at the surface of Leydig cells, initiating a signaling response that promotes the expression of enzymes required for testosterone synthesis in a CREB-dependent manner. Also acts as a regulator of brain development: osteocalcin hormone crosses the blood-brain barrier and acts as a ligand for GPR158 on neurons, initiating a signaling response that prevents neuronal apoptosis in the hippocampus, favors the synthesis of all monoamine neurotransmitters and inhibits that of gamma-aminobutyric acid (GABA). Osteocalcin also crosses the placenta during pregnancy and maternal osteocalcin is required for fetal brain development.</text>
</comment>
<comment type="subcellular location">
    <subcellularLocation>
        <location evidence="5">Secreted</location>
    </subcellularLocation>
</comment>
<comment type="PTM">
    <text evidence="5 6">Gamma-carboxyglutamate residues are formed by vitamin K dependent carboxylation by GGCX. These residues are essential for the binding of calcium (By similarity). Decarboxylation promotes the hormone activity (By similarity).</text>
</comment>
<comment type="similarity">
    <text evidence="7">Belongs to the osteocalcin/matrix Gla protein family.</text>
</comment>
<organism>
    <name type="scientific">Macaca mulatta</name>
    <name type="common">Rhesus macaque</name>
    <dbReference type="NCBI Taxonomy" id="9544"/>
    <lineage>
        <taxon>Eukaryota</taxon>
        <taxon>Metazoa</taxon>
        <taxon>Chordata</taxon>
        <taxon>Craniata</taxon>
        <taxon>Vertebrata</taxon>
        <taxon>Euteleostomi</taxon>
        <taxon>Mammalia</taxon>
        <taxon>Eutheria</taxon>
        <taxon>Euarchontoglires</taxon>
        <taxon>Primates</taxon>
        <taxon>Haplorrhini</taxon>
        <taxon>Catarrhini</taxon>
        <taxon>Cercopithecidae</taxon>
        <taxon>Cercopithecinae</taxon>
        <taxon>Macaca</taxon>
    </lineage>
</organism>
<sequence length="100" mass="10967">MRALTLLALLALATLCITGQAGAKPSGAESSKGAAFVSKQEGSEVVKRPRRYLYQWLGAPAPYPDPLEPKREVCELNPDCDELADHIGFQEAYRRFYGPV</sequence>
<feature type="signal peptide" evidence="7">
    <location>
        <begin position="1"/>
        <end position="23"/>
    </location>
</feature>
<feature type="propeptide" id="PRO_0000285412" evidence="1">
    <location>
        <begin position="24"/>
        <end position="51"/>
    </location>
</feature>
<feature type="chain" id="PRO_0000285413" description="Osteocalcin">
    <location>
        <begin position="52"/>
        <end position="100"/>
    </location>
</feature>
<feature type="domain" description="Gla" evidence="6">
    <location>
        <begin position="52"/>
        <end position="98"/>
    </location>
</feature>
<feature type="binding site" evidence="3">
    <location>
        <position position="68"/>
    </location>
    <ligand>
        <name>Ca(2+)</name>
        <dbReference type="ChEBI" id="CHEBI:29108"/>
        <label>1</label>
    </ligand>
</feature>
<feature type="binding site" evidence="3">
    <location>
        <position position="72"/>
    </location>
    <ligand>
        <name>Ca(2+)</name>
        <dbReference type="ChEBI" id="CHEBI:29108"/>
        <label>2</label>
    </ligand>
</feature>
<feature type="binding site" evidence="3">
    <location>
        <position position="75"/>
    </location>
    <ligand>
        <name>Ca(2+)</name>
        <dbReference type="ChEBI" id="CHEBI:29108"/>
        <label>2</label>
    </ligand>
</feature>
<feature type="binding site" evidence="3">
    <location>
        <position position="75"/>
    </location>
    <ligand>
        <name>Ca(2+)</name>
        <dbReference type="ChEBI" id="CHEBI:29108"/>
        <label>3</label>
    </ligand>
</feature>
<feature type="binding site" evidence="3">
    <location>
        <position position="81"/>
    </location>
    <ligand>
        <name>Ca(2+)</name>
        <dbReference type="ChEBI" id="CHEBI:29108"/>
        <label>3</label>
    </ligand>
</feature>
<feature type="modified residue" description="4-hydroxyproline" evidence="1">
    <location>
        <position position="60"/>
    </location>
</feature>
<feature type="modified residue" description="4-carboxyglutamate" evidence="2 6">
    <location>
        <position position="68"/>
    </location>
</feature>
<feature type="modified residue" description="4-carboxyglutamate" evidence="4 6">
    <location>
        <position position="72"/>
    </location>
</feature>
<feature type="modified residue" description="4-carboxyglutamate" evidence="4 6">
    <location>
        <position position="75"/>
    </location>
</feature>
<feature type="disulfide bond" evidence="6">
    <location>
        <begin position="74"/>
        <end position="80"/>
    </location>
</feature>
<protein>
    <recommendedName>
        <fullName>Osteocalcin</fullName>
    </recommendedName>
    <alternativeName>
        <fullName>Bone Gla protein</fullName>
        <shortName>BGP</shortName>
    </alternativeName>
    <alternativeName>
        <fullName>Gamma-carboxyglutamic acid-containing protein</fullName>
    </alternativeName>
</protein>
<gene>
    <name type="primary">BGLAP</name>
</gene>
<keyword id="KW-0091">Biomineralization</keyword>
<keyword id="KW-0106">Calcium</keyword>
<keyword id="KW-0165">Cleavage on pair of basic residues</keyword>
<keyword id="KW-1015">Disulfide bond</keyword>
<keyword id="KW-0301">Gamma-carboxyglutamic acid</keyword>
<keyword id="KW-0372">Hormone</keyword>
<keyword id="KW-0379">Hydroxylation</keyword>
<keyword id="KW-0479">Metal-binding</keyword>
<keyword id="KW-1185">Reference proteome</keyword>
<keyword id="KW-0964">Secreted</keyword>
<keyword id="KW-0732">Signal</keyword>